<comment type="function">
    <text evidence="1">Essential cell division protein. May link together the upstream cell division proteins, which are predominantly cytoplasmic, with the downstream cell division proteins, which are predominantly periplasmic.</text>
</comment>
<comment type="subunit">
    <text evidence="1">Part of a complex composed of FtsB, FtsL and FtsQ.</text>
</comment>
<comment type="subcellular location">
    <subcellularLocation>
        <location evidence="1">Cell inner membrane</location>
        <topology evidence="1">Single-pass type II membrane protein</topology>
    </subcellularLocation>
    <text evidence="1">Localizes to the division septum.</text>
</comment>
<comment type="similarity">
    <text evidence="1">Belongs to the FtsB family.</text>
</comment>
<organism>
    <name type="scientific">Thioalkalivibrio sulfidiphilus (strain HL-EbGR7)</name>
    <dbReference type="NCBI Taxonomy" id="396588"/>
    <lineage>
        <taxon>Bacteria</taxon>
        <taxon>Pseudomonadati</taxon>
        <taxon>Pseudomonadota</taxon>
        <taxon>Gammaproteobacteria</taxon>
        <taxon>Chromatiales</taxon>
        <taxon>Ectothiorhodospiraceae</taxon>
        <taxon>Thioalkalivibrio</taxon>
    </lineage>
</organism>
<accession>B8GQ76</accession>
<evidence type="ECO:0000255" key="1">
    <source>
        <dbReference type="HAMAP-Rule" id="MF_00599"/>
    </source>
</evidence>
<feature type="chain" id="PRO_1000147008" description="Cell division protein FtsB">
    <location>
        <begin position="1"/>
        <end position="95"/>
    </location>
</feature>
<feature type="topological domain" description="Cytoplasmic" evidence="1">
    <location>
        <begin position="1"/>
        <end position="3"/>
    </location>
</feature>
<feature type="transmembrane region" description="Helical" evidence="1">
    <location>
        <begin position="4"/>
        <end position="21"/>
    </location>
</feature>
<feature type="topological domain" description="Periplasmic" evidence="1">
    <location>
        <begin position="22"/>
        <end position="95"/>
    </location>
</feature>
<feature type="coiled-coil region" evidence="1">
    <location>
        <begin position="26"/>
        <end position="73"/>
    </location>
</feature>
<gene>
    <name evidence="1" type="primary">ftsB</name>
    <name type="ordered locus">Tgr7_1185</name>
</gene>
<reference key="1">
    <citation type="journal article" date="2011" name="Stand. Genomic Sci.">
        <title>Complete genome sequence of 'Thioalkalivibrio sulfidophilus' HL-EbGr7.</title>
        <authorList>
            <person name="Muyzer G."/>
            <person name="Sorokin D.Y."/>
            <person name="Mavromatis K."/>
            <person name="Lapidus A."/>
            <person name="Clum A."/>
            <person name="Ivanova N."/>
            <person name="Pati A."/>
            <person name="d'Haeseleer P."/>
            <person name="Woyke T."/>
            <person name="Kyrpides N.C."/>
        </authorList>
    </citation>
    <scope>NUCLEOTIDE SEQUENCE [LARGE SCALE GENOMIC DNA]</scope>
    <source>
        <strain>HL-EbGR7</strain>
    </source>
</reference>
<name>FTSB_THISH</name>
<dbReference type="EMBL" id="CP001339">
    <property type="protein sequence ID" value="ACL72271.1"/>
    <property type="molecule type" value="Genomic_DNA"/>
</dbReference>
<dbReference type="RefSeq" id="WP_012637754.1">
    <property type="nucleotide sequence ID" value="NC_011901.1"/>
</dbReference>
<dbReference type="SMR" id="B8GQ76"/>
<dbReference type="STRING" id="396588.Tgr7_1185"/>
<dbReference type="KEGG" id="tgr:Tgr7_1185"/>
<dbReference type="eggNOG" id="COG2919">
    <property type="taxonomic scope" value="Bacteria"/>
</dbReference>
<dbReference type="HOGENOM" id="CLU_134863_5_0_6"/>
<dbReference type="OrthoDB" id="7061211at2"/>
<dbReference type="Proteomes" id="UP000002383">
    <property type="component" value="Chromosome"/>
</dbReference>
<dbReference type="GO" id="GO:0032153">
    <property type="term" value="C:cell division site"/>
    <property type="evidence" value="ECO:0007669"/>
    <property type="project" value="UniProtKB-UniRule"/>
</dbReference>
<dbReference type="GO" id="GO:0030428">
    <property type="term" value="C:cell septum"/>
    <property type="evidence" value="ECO:0007669"/>
    <property type="project" value="TreeGrafter"/>
</dbReference>
<dbReference type="GO" id="GO:0005886">
    <property type="term" value="C:plasma membrane"/>
    <property type="evidence" value="ECO:0007669"/>
    <property type="project" value="UniProtKB-SubCell"/>
</dbReference>
<dbReference type="GO" id="GO:0043093">
    <property type="term" value="P:FtsZ-dependent cytokinesis"/>
    <property type="evidence" value="ECO:0007669"/>
    <property type="project" value="UniProtKB-UniRule"/>
</dbReference>
<dbReference type="HAMAP" id="MF_00599">
    <property type="entry name" value="FtsB"/>
    <property type="match status" value="1"/>
</dbReference>
<dbReference type="InterPro" id="IPR023081">
    <property type="entry name" value="Cell_div_FtsB"/>
</dbReference>
<dbReference type="InterPro" id="IPR007060">
    <property type="entry name" value="FtsL/DivIC"/>
</dbReference>
<dbReference type="NCBIfam" id="NF002058">
    <property type="entry name" value="PRK00888.1"/>
    <property type="match status" value="1"/>
</dbReference>
<dbReference type="PANTHER" id="PTHR37485">
    <property type="entry name" value="CELL DIVISION PROTEIN FTSB"/>
    <property type="match status" value="1"/>
</dbReference>
<dbReference type="PANTHER" id="PTHR37485:SF1">
    <property type="entry name" value="CELL DIVISION PROTEIN FTSB"/>
    <property type="match status" value="1"/>
</dbReference>
<dbReference type="Pfam" id="PF04977">
    <property type="entry name" value="DivIC"/>
    <property type="match status" value="1"/>
</dbReference>
<sequence>MKWVTGLLVVLLLGLQYKLWIGEGSVAEVWQLRQTLEAQRAENEELRYRNAALDAEVTDLKTGLDAIEERARRELGMIRRDETFFQVVGRPGETP</sequence>
<protein>
    <recommendedName>
        <fullName evidence="1">Cell division protein FtsB</fullName>
    </recommendedName>
</protein>
<keyword id="KW-0131">Cell cycle</keyword>
<keyword id="KW-0132">Cell division</keyword>
<keyword id="KW-0997">Cell inner membrane</keyword>
<keyword id="KW-1003">Cell membrane</keyword>
<keyword id="KW-0175">Coiled coil</keyword>
<keyword id="KW-0472">Membrane</keyword>
<keyword id="KW-1185">Reference proteome</keyword>
<keyword id="KW-0812">Transmembrane</keyword>
<keyword id="KW-1133">Transmembrane helix</keyword>
<proteinExistence type="inferred from homology"/>